<proteinExistence type="inferred from homology"/>
<keyword id="KW-0030">Aminoacyl-tRNA synthetase</keyword>
<keyword id="KW-0067">ATP-binding</keyword>
<keyword id="KW-0963">Cytoplasm</keyword>
<keyword id="KW-0436">Ligase</keyword>
<keyword id="KW-0547">Nucleotide-binding</keyword>
<keyword id="KW-0648">Protein biosynthesis</keyword>
<keyword id="KW-1185">Reference proteome</keyword>
<dbReference type="EC" id="6.1.1.21" evidence="1"/>
<dbReference type="EMBL" id="CP000382">
    <property type="protein sequence ID" value="ABK61733.1"/>
    <property type="molecule type" value="Genomic_DNA"/>
</dbReference>
<dbReference type="RefSeq" id="WP_011721925.1">
    <property type="nucleotide sequence ID" value="NC_008593.1"/>
</dbReference>
<dbReference type="SMR" id="A0PZW9"/>
<dbReference type="STRING" id="386415.NT01CX_1848"/>
<dbReference type="KEGG" id="cno:NT01CX_1848"/>
<dbReference type="eggNOG" id="COG0124">
    <property type="taxonomic scope" value="Bacteria"/>
</dbReference>
<dbReference type="HOGENOM" id="CLU_025113_1_1_9"/>
<dbReference type="Proteomes" id="UP000008220">
    <property type="component" value="Chromosome"/>
</dbReference>
<dbReference type="GO" id="GO:0005737">
    <property type="term" value="C:cytoplasm"/>
    <property type="evidence" value="ECO:0007669"/>
    <property type="project" value="UniProtKB-SubCell"/>
</dbReference>
<dbReference type="GO" id="GO:0005524">
    <property type="term" value="F:ATP binding"/>
    <property type="evidence" value="ECO:0007669"/>
    <property type="project" value="UniProtKB-UniRule"/>
</dbReference>
<dbReference type="GO" id="GO:0140096">
    <property type="term" value="F:catalytic activity, acting on a protein"/>
    <property type="evidence" value="ECO:0007669"/>
    <property type="project" value="UniProtKB-ARBA"/>
</dbReference>
<dbReference type="GO" id="GO:0004821">
    <property type="term" value="F:histidine-tRNA ligase activity"/>
    <property type="evidence" value="ECO:0007669"/>
    <property type="project" value="UniProtKB-UniRule"/>
</dbReference>
<dbReference type="GO" id="GO:0016740">
    <property type="term" value="F:transferase activity"/>
    <property type="evidence" value="ECO:0007669"/>
    <property type="project" value="UniProtKB-ARBA"/>
</dbReference>
<dbReference type="GO" id="GO:0006427">
    <property type="term" value="P:histidyl-tRNA aminoacylation"/>
    <property type="evidence" value="ECO:0007669"/>
    <property type="project" value="UniProtKB-UniRule"/>
</dbReference>
<dbReference type="CDD" id="cd00773">
    <property type="entry name" value="HisRS-like_core"/>
    <property type="match status" value="1"/>
</dbReference>
<dbReference type="CDD" id="cd00859">
    <property type="entry name" value="HisRS_anticodon"/>
    <property type="match status" value="1"/>
</dbReference>
<dbReference type="FunFam" id="3.30.930.10:FF:000005">
    <property type="entry name" value="Histidine--tRNA ligase"/>
    <property type="match status" value="1"/>
</dbReference>
<dbReference type="Gene3D" id="3.40.50.800">
    <property type="entry name" value="Anticodon-binding domain"/>
    <property type="match status" value="1"/>
</dbReference>
<dbReference type="Gene3D" id="3.30.930.10">
    <property type="entry name" value="Bira Bifunctional Protein, Domain 2"/>
    <property type="match status" value="1"/>
</dbReference>
<dbReference type="HAMAP" id="MF_00127">
    <property type="entry name" value="His_tRNA_synth"/>
    <property type="match status" value="1"/>
</dbReference>
<dbReference type="InterPro" id="IPR006195">
    <property type="entry name" value="aa-tRNA-synth_II"/>
</dbReference>
<dbReference type="InterPro" id="IPR045864">
    <property type="entry name" value="aa-tRNA-synth_II/BPL/LPL"/>
</dbReference>
<dbReference type="InterPro" id="IPR004154">
    <property type="entry name" value="Anticodon-bd"/>
</dbReference>
<dbReference type="InterPro" id="IPR036621">
    <property type="entry name" value="Anticodon-bd_dom_sf"/>
</dbReference>
<dbReference type="InterPro" id="IPR015807">
    <property type="entry name" value="His-tRNA-ligase"/>
</dbReference>
<dbReference type="InterPro" id="IPR041715">
    <property type="entry name" value="HisRS-like_core"/>
</dbReference>
<dbReference type="InterPro" id="IPR004516">
    <property type="entry name" value="HisRS/HisZ"/>
</dbReference>
<dbReference type="InterPro" id="IPR033656">
    <property type="entry name" value="HisRS_anticodon"/>
</dbReference>
<dbReference type="NCBIfam" id="TIGR00442">
    <property type="entry name" value="hisS"/>
    <property type="match status" value="1"/>
</dbReference>
<dbReference type="PANTHER" id="PTHR43707:SF1">
    <property type="entry name" value="HISTIDINE--TRNA LIGASE, MITOCHONDRIAL-RELATED"/>
    <property type="match status" value="1"/>
</dbReference>
<dbReference type="PANTHER" id="PTHR43707">
    <property type="entry name" value="HISTIDYL-TRNA SYNTHETASE"/>
    <property type="match status" value="1"/>
</dbReference>
<dbReference type="Pfam" id="PF03129">
    <property type="entry name" value="HGTP_anticodon"/>
    <property type="match status" value="1"/>
</dbReference>
<dbReference type="Pfam" id="PF13393">
    <property type="entry name" value="tRNA-synt_His"/>
    <property type="match status" value="1"/>
</dbReference>
<dbReference type="PIRSF" id="PIRSF001549">
    <property type="entry name" value="His-tRNA_synth"/>
    <property type="match status" value="1"/>
</dbReference>
<dbReference type="SUPFAM" id="SSF52954">
    <property type="entry name" value="Class II aaRS ABD-related"/>
    <property type="match status" value="1"/>
</dbReference>
<dbReference type="SUPFAM" id="SSF55681">
    <property type="entry name" value="Class II aaRS and biotin synthetases"/>
    <property type="match status" value="1"/>
</dbReference>
<dbReference type="PROSITE" id="PS50862">
    <property type="entry name" value="AA_TRNA_LIGASE_II"/>
    <property type="match status" value="1"/>
</dbReference>
<comment type="catalytic activity">
    <reaction evidence="1">
        <text>tRNA(His) + L-histidine + ATP = L-histidyl-tRNA(His) + AMP + diphosphate + H(+)</text>
        <dbReference type="Rhea" id="RHEA:17313"/>
        <dbReference type="Rhea" id="RHEA-COMP:9665"/>
        <dbReference type="Rhea" id="RHEA-COMP:9689"/>
        <dbReference type="ChEBI" id="CHEBI:15378"/>
        <dbReference type="ChEBI" id="CHEBI:30616"/>
        <dbReference type="ChEBI" id="CHEBI:33019"/>
        <dbReference type="ChEBI" id="CHEBI:57595"/>
        <dbReference type="ChEBI" id="CHEBI:78442"/>
        <dbReference type="ChEBI" id="CHEBI:78527"/>
        <dbReference type="ChEBI" id="CHEBI:456215"/>
        <dbReference type="EC" id="6.1.1.21"/>
    </reaction>
</comment>
<comment type="subunit">
    <text evidence="1">Homodimer.</text>
</comment>
<comment type="subcellular location">
    <subcellularLocation>
        <location evidence="1">Cytoplasm</location>
    </subcellularLocation>
</comment>
<comment type="similarity">
    <text evidence="1">Belongs to the class-II aminoacyl-tRNA synthetase family.</text>
</comment>
<protein>
    <recommendedName>
        <fullName evidence="1">Histidine--tRNA ligase</fullName>
        <ecNumber evidence="1">6.1.1.21</ecNumber>
    </recommendedName>
    <alternativeName>
        <fullName evidence="1">Histidyl-tRNA synthetase</fullName>
        <shortName evidence="1">HisRS</shortName>
    </alternativeName>
</protein>
<evidence type="ECO:0000255" key="1">
    <source>
        <dbReference type="HAMAP-Rule" id="MF_00127"/>
    </source>
</evidence>
<feature type="chain" id="PRO_1000016346" description="Histidine--tRNA ligase">
    <location>
        <begin position="1"/>
        <end position="416"/>
    </location>
</feature>
<sequence length="416" mass="47615">MAIQAPKGTKDLLPMDSYKWHYIEDKLKKLAAEYALKEIRTPAFEHTELFERGVGETTDVVQKEMYTFKDKGDRSITLKPEGTAPAARAFIENGLFNEALPIKMFYFTPVFRYENVQKGRLREHHQFGVEVFGSTEASVDAELIGLAMRAFKEFRIDNLELNINNIGCPECRKKYNDALREYFRESYDELCDTCKTRFERNPMRLLDCKNKKCKEIGKDAPVILDYVCDDCSNHFENLKTYLDSLNIKYKVNPYIVRGLDYYTKTVFEIINNDITVCGGGRYNGLIEQIGGKPTPAVGFGMGIERLILTLMENNIEIPKPKEMDIFIGSMGDNGKIEAFKLVNALRTKGLKAECDHMNKSVKAQMKYANKIDASYSMIIGDTEIEEKKANLKRMEDGQQFEVSLNNLDEIASMILK</sequence>
<organism>
    <name type="scientific">Clostridium novyi (strain NT)</name>
    <dbReference type="NCBI Taxonomy" id="386415"/>
    <lineage>
        <taxon>Bacteria</taxon>
        <taxon>Bacillati</taxon>
        <taxon>Bacillota</taxon>
        <taxon>Clostridia</taxon>
        <taxon>Eubacteriales</taxon>
        <taxon>Clostridiaceae</taxon>
        <taxon>Clostridium</taxon>
    </lineage>
</organism>
<reference key="1">
    <citation type="journal article" date="2006" name="Nat. Biotechnol.">
        <title>The genome and transcriptomes of the anti-tumor agent Clostridium novyi-NT.</title>
        <authorList>
            <person name="Bettegowda C."/>
            <person name="Huang X."/>
            <person name="Lin J."/>
            <person name="Cheong I."/>
            <person name="Kohli M."/>
            <person name="Szabo S.A."/>
            <person name="Zhang X."/>
            <person name="Diaz L.A. Jr."/>
            <person name="Velculescu V.E."/>
            <person name="Parmigiani G."/>
            <person name="Kinzler K.W."/>
            <person name="Vogelstein B."/>
            <person name="Zhou S."/>
        </authorList>
    </citation>
    <scope>NUCLEOTIDE SEQUENCE [LARGE SCALE GENOMIC DNA]</scope>
    <source>
        <strain>NT</strain>
    </source>
</reference>
<accession>A0PZW9</accession>
<name>SYH_CLONN</name>
<gene>
    <name evidence="1" type="primary">hisS</name>
    <name type="ordered locus">NT01CX_1848</name>
</gene>